<keyword id="KW-0053">Apoptosis</keyword>
<keyword id="KW-0963">Cytoplasm</keyword>
<keyword id="KW-0968">Cytoplasmic vesicle</keyword>
<keyword id="KW-0539">Nucleus</keyword>
<keyword id="KW-1185">Reference proteome</keyword>
<keyword id="KW-0677">Repeat</keyword>
<sequence>MRRTPAAERLSELGFPPRRGRQEPPFPLGVTRGWGGWPIEKRREGPRPVPFSERSPEDGREQPAHGSGILWRVRTRLSLCRDPEPPPPPPPLCLLRVSLLCALRAGGRGSRWGEDGAGLLLLPPAGASGSLKAERSSSTPYAGRMLENSGCKALKEGVLEKRSDGLLQLWKKKCCILTEEGLLLIPPKQLQQQQQQQQPGQGTAEPSQPSGPTVASLEPPVKLKELHFSNMKTVDCVERKGKYMYFTVVMTEGKEIDFRCPQDQGWNAEITLQMVQYKNRQAILAVKSTRQKQQHLVQQQPPQTQQIQPQPQPQIQPQPQPQIQPQPQPQPQPQPQPQPQPQPQQLHSYPHPHPHPYSHPHQHPHPHPHPHPHPHPHPYQLQHAHQPLHSQPQGHRLLRSTSNSA</sequence>
<proteinExistence type="evidence at protein level"/>
<evidence type="ECO:0000250" key="1"/>
<evidence type="ECO:0000250" key="2">
    <source>
        <dbReference type="UniProtKB" id="Q8WV24"/>
    </source>
</evidence>
<evidence type="ECO:0000256" key="3">
    <source>
        <dbReference type="SAM" id="MobiDB-lite"/>
    </source>
</evidence>
<evidence type="ECO:0000269" key="4">
    <source>
    </source>
</evidence>
<evidence type="ECO:0000269" key="5">
    <source>
    </source>
</evidence>
<evidence type="ECO:0000269" key="6">
    <source>
    </source>
</evidence>
<evidence type="ECO:0000269" key="7">
    <source>
    </source>
</evidence>
<evidence type="ECO:0000269" key="8">
    <source>
    </source>
</evidence>
<evidence type="ECO:0000305" key="9"/>
<accession>Q62392</accession>
<accession>Q3TY48</accession>
<accession>Q3UG87</accession>
<reference key="1">
    <citation type="journal article" date="1996" name="Immunity">
        <title>A novel gene product that couples TCR signaling to Fas(CD95) expression in activation-induced cell death.</title>
        <authorList>
            <person name="Park C.G."/>
            <person name="Lee S.Y."/>
            <person name="Kandala G."/>
            <person name="Lee S.Y."/>
            <person name="Choi Y."/>
        </authorList>
    </citation>
    <scope>NUCLEOTIDE SEQUENCE [MRNA]</scope>
    <scope>FUNCTION</scope>
</reference>
<reference key="2">
    <citation type="journal article" date="2005" name="Science">
        <title>The transcriptional landscape of the mammalian genome.</title>
        <authorList>
            <person name="Carninci P."/>
            <person name="Kasukawa T."/>
            <person name="Katayama S."/>
            <person name="Gough J."/>
            <person name="Frith M.C."/>
            <person name="Maeda N."/>
            <person name="Oyama R."/>
            <person name="Ravasi T."/>
            <person name="Lenhard B."/>
            <person name="Wells C."/>
            <person name="Kodzius R."/>
            <person name="Shimokawa K."/>
            <person name="Bajic V.B."/>
            <person name="Brenner S.E."/>
            <person name="Batalov S."/>
            <person name="Forrest A.R."/>
            <person name="Zavolan M."/>
            <person name="Davis M.J."/>
            <person name="Wilming L.G."/>
            <person name="Aidinis V."/>
            <person name="Allen J.E."/>
            <person name="Ambesi-Impiombato A."/>
            <person name="Apweiler R."/>
            <person name="Aturaliya R.N."/>
            <person name="Bailey T.L."/>
            <person name="Bansal M."/>
            <person name="Baxter L."/>
            <person name="Beisel K.W."/>
            <person name="Bersano T."/>
            <person name="Bono H."/>
            <person name="Chalk A.M."/>
            <person name="Chiu K.P."/>
            <person name="Choudhary V."/>
            <person name="Christoffels A."/>
            <person name="Clutterbuck D.R."/>
            <person name="Crowe M.L."/>
            <person name="Dalla E."/>
            <person name="Dalrymple B.P."/>
            <person name="de Bono B."/>
            <person name="Della Gatta G."/>
            <person name="di Bernardo D."/>
            <person name="Down T."/>
            <person name="Engstrom P."/>
            <person name="Fagiolini M."/>
            <person name="Faulkner G."/>
            <person name="Fletcher C.F."/>
            <person name="Fukushima T."/>
            <person name="Furuno M."/>
            <person name="Futaki S."/>
            <person name="Gariboldi M."/>
            <person name="Georgii-Hemming P."/>
            <person name="Gingeras T.R."/>
            <person name="Gojobori T."/>
            <person name="Green R.E."/>
            <person name="Gustincich S."/>
            <person name="Harbers M."/>
            <person name="Hayashi Y."/>
            <person name="Hensch T.K."/>
            <person name="Hirokawa N."/>
            <person name="Hill D."/>
            <person name="Huminiecki L."/>
            <person name="Iacono M."/>
            <person name="Ikeo K."/>
            <person name="Iwama A."/>
            <person name="Ishikawa T."/>
            <person name="Jakt M."/>
            <person name="Kanapin A."/>
            <person name="Katoh M."/>
            <person name="Kawasawa Y."/>
            <person name="Kelso J."/>
            <person name="Kitamura H."/>
            <person name="Kitano H."/>
            <person name="Kollias G."/>
            <person name="Krishnan S.P."/>
            <person name="Kruger A."/>
            <person name="Kummerfeld S.K."/>
            <person name="Kurochkin I.V."/>
            <person name="Lareau L.F."/>
            <person name="Lazarevic D."/>
            <person name="Lipovich L."/>
            <person name="Liu J."/>
            <person name="Liuni S."/>
            <person name="McWilliam S."/>
            <person name="Madan Babu M."/>
            <person name="Madera M."/>
            <person name="Marchionni L."/>
            <person name="Matsuda H."/>
            <person name="Matsuzawa S."/>
            <person name="Miki H."/>
            <person name="Mignone F."/>
            <person name="Miyake S."/>
            <person name="Morris K."/>
            <person name="Mottagui-Tabar S."/>
            <person name="Mulder N."/>
            <person name="Nakano N."/>
            <person name="Nakauchi H."/>
            <person name="Ng P."/>
            <person name="Nilsson R."/>
            <person name="Nishiguchi S."/>
            <person name="Nishikawa S."/>
            <person name="Nori F."/>
            <person name="Ohara O."/>
            <person name="Okazaki Y."/>
            <person name="Orlando V."/>
            <person name="Pang K.C."/>
            <person name="Pavan W.J."/>
            <person name="Pavesi G."/>
            <person name="Pesole G."/>
            <person name="Petrovsky N."/>
            <person name="Piazza S."/>
            <person name="Reed J."/>
            <person name="Reid J.F."/>
            <person name="Ring B.Z."/>
            <person name="Ringwald M."/>
            <person name="Rost B."/>
            <person name="Ruan Y."/>
            <person name="Salzberg S.L."/>
            <person name="Sandelin A."/>
            <person name="Schneider C."/>
            <person name="Schoenbach C."/>
            <person name="Sekiguchi K."/>
            <person name="Semple C.A."/>
            <person name="Seno S."/>
            <person name="Sessa L."/>
            <person name="Sheng Y."/>
            <person name="Shibata Y."/>
            <person name="Shimada H."/>
            <person name="Shimada K."/>
            <person name="Silva D."/>
            <person name="Sinclair B."/>
            <person name="Sperling S."/>
            <person name="Stupka E."/>
            <person name="Sugiura K."/>
            <person name="Sultana R."/>
            <person name="Takenaka Y."/>
            <person name="Taki K."/>
            <person name="Tammoja K."/>
            <person name="Tan S.L."/>
            <person name="Tang S."/>
            <person name="Taylor M.S."/>
            <person name="Tegner J."/>
            <person name="Teichmann S.A."/>
            <person name="Ueda H.R."/>
            <person name="van Nimwegen E."/>
            <person name="Verardo R."/>
            <person name="Wei C.L."/>
            <person name="Yagi K."/>
            <person name="Yamanishi H."/>
            <person name="Zabarovsky E."/>
            <person name="Zhu S."/>
            <person name="Zimmer A."/>
            <person name="Hide W."/>
            <person name="Bult C."/>
            <person name="Grimmond S.M."/>
            <person name="Teasdale R.D."/>
            <person name="Liu E.T."/>
            <person name="Brusic V."/>
            <person name="Quackenbush J."/>
            <person name="Wahlestedt C."/>
            <person name="Mattick J.S."/>
            <person name="Hume D.A."/>
            <person name="Kai C."/>
            <person name="Sasaki D."/>
            <person name="Tomaru Y."/>
            <person name="Fukuda S."/>
            <person name="Kanamori-Katayama M."/>
            <person name="Suzuki M."/>
            <person name="Aoki J."/>
            <person name="Arakawa T."/>
            <person name="Iida J."/>
            <person name="Imamura K."/>
            <person name="Itoh M."/>
            <person name="Kato T."/>
            <person name="Kawaji H."/>
            <person name="Kawagashira N."/>
            <person name="Kawashima T."/>
            <person name="Kojima M."/>
            <person name="Kondo S."/>
            <person name="Konno H."/>
            <person name="Nakano K."/>
            <person name="Ninomiya N."/>
            <person name="Nishio T."/>
            <person name="Okada M."/>
            <person name="Plessy C."/>
            <person name="Shibata K."/>
            <person name="Shiraki T."/>
            <person name="Suzuki S."/>
            <person name="Tagami M."/>
            <person name="Waki K."/>
            <person name="Watahiki A."/>
            <person name="Okamura-Oho Y."/>
            <person name="Suzuki H."/>
            <person name="Kawai J."/>
            <person name="Hayashizaki Y."/>
        </authorList>
    </citation>
    <scope>NUCLEOTIDE SEQUENCE [LARGE SCALE MRNA] OF 50-405</scope>
    <source>
        <strain>C57BL/6J</strain>
    </source>
</reference>
<reference key="3">
    <citation type="journal article" date="2004" name="Genome Res.">
        <title>The status, quality, and expansion of the NIH full-length cDNA project: the Mammalian Gene Collection (MGC).</title>
        <authorList>
            <consortium name="The MGC Project Team"/>
        </authorList>
    </citation>
    <scope>NUCLEOTIDE SEQUENCE [LARGE SCALE MRNA] OF 107-405</scope>
    <source>
        <strain>129</strain>
        <tissue>Mammary tumor</tissue>
    </source>
</reference>
<reference key="4">
    <citation type="journal article" date="1999" name="J. Neurochem.">
        <title>A proline- and glutamine-rich protein promotes apoptosis in neuronal cells.</title>
        <authorList>
            <person name="Gomes I."/>
            <person name="Xiong W."/>
            <person name="Miki T."/>
            <person name="Rosner M.R."/>
        </authorList>
    </citation>
    <scope>TISSUE SPECIFICITY</scope>
</reference>
<reference key="5">
    <citation type="journal article" date="1999" name="Mamm. Genome">
        <title>A novel pleckstrin homology-related gene family defined by Ipl/Tssc3, TDAG51, and Tih1: tissue-specific expression, chromosomal location, and parental imprinting.</title>
        <authorList>
            <person name="Frank D."/>
            <person name="Mendelsohn C.L."/>
            <person name="Ciccone E."/>
            <person name="Svensson K."/>
            <person name="Ohlsson R."/>
            <person name="Tycko B."/>
        </authorList>
    </citation>
    <scope>TISSUE SPECIFICITY</scope>
</reference>
<reference key="6">
    <citation type="journal article" date="2003" name="J. Biol. Chem.">
        <title>TDAG51 is induced by homocysteine, promotes detachment-mediated programmed cell death, and contributes to the development of atherosclerosis in hyperhomocysteinemia.</title>
        <authorList>
            <person name="Hossain G.S."/>
            <person name="van Thienen J.V."/>
            <person name="Werstuck G.H."/>
            <person name="Zhou J."/>
            <person name="Sood S.K."/>
            <person name="Dickhout J.G."/>
            <person name="de Koning A.B."/>
            <person name="Tang D."/>
            <person name="Wu D."/>
            <person name="Falk E."/>
            <person name="Poddar R."/>
            <person name="Jacobsen D.W."/>
            <person name="Zhang K."/>
            <person name="Kaufman R.J."/>
            <person name="Austin R.C."/>
        </authorList>
    </citation>
    <scope>TISSUE SPECIFICITY</scope>
</reference>
<reference key="7">
    <citation type="journal article" date="2004" name="J. Biol. Chem.">
        <title>TDAG51 mediates the effects of insulin-like growth factor I (IGF-I) on cell survival.</title>
        <authorList>
            <person name="Toyoshima Y."/>
            <person name="Karas M."/>
            <person name="Yakar S."/>
            <person name="Dupont J."/>
            <person name="Helman L."/>
            <person name="LeRoith D."/>
        </authorList>
    </citation>
    <scope>FUNCTION</scope>
    <scope>INDUCTION</scope>
</reference>
<reference key="8">
    <citation type="journal article" date="2010" name="Cell">
        <title>A tissue-specific atlas of mouse protein phosphorylation and expression.</title>
        <authorList>
            <person name="Huttlin E.L."/>
            <person name="Jedrychowski M.P."/>
            <person name="Elias J.E."/>
            <person name="Goswami T."/>
            <person name="Rad R."/>
            <person name="Beausoleil S.A."/>
            <person name="Villen J."/>
            <person name="Haas W."/>
            <person name="Sowa M.E."/>
            <person name="Gygi S.P."/>
        </authorList>
    </citation>
    <scope>IDENTIFICATION BY MASS SPECTROMETRY [LARGE SCALE ANALYSIS]</scope>
    <source>
        <tissue>Liver</tissue>
    </source>
</reference>
<protein>
    <recommendedName>
        <fullName>Pleckstrin homology-like domain family A member 1</fullName>
    </recommendedName>
    <alternativeName>
        <fullName>Proline- and glutamine-rich protein</fullName>
        <shortName>PQ-rich protein</shortName>
        <shortName>PQR protein</shortName>
    </alternativeName>
    <alternativeName>
        <fullName>T-cell death-associated gene 51 protein</fullName>
    </alternativeName>
</protein>
<comment type="function">
    <text evidence="7 8">Seems to be involved in regulation of apoptosis. May be involved in detachment-mediated programmed cell death. May mediate apoptosis during neuronal development. May be involved in regulation of anti-apoptotic effects of IGF1. Required for TCR-induced apoptosis and expression of TNFRSF6/FAS in a T-cell hybridoma cell line. May be involved in translational regulation.</text>
</comment>
<comment type="subunit">
    <text evidence="1">Interacts with RPL14, EIF3S7 and PABPC4.</text>
</comment>
<comment type="interaction">
    <interactant intactId="EBI-309727">
        <id>Q62392</id>
    </interactant>
    <interactant intactId="EBI-357034">
        <id>P25685</id>
        <label>DNAJB1</label>
    </interactant>
    <organismsDiffer>true</organismsDiffer>
    <experiments>2</experiments>
</comment>
<comment type="interaction">
    <interactant intactId="EBI-309727">
        <id>Q62392</id>
    </interactant>
    <interactant intactId="EBI-629985">
        <id>P08107</id>
        <label>HSPA1B</label>
    </interactant>
    <organismsDiffer>true</organismsDiffer>
    <experiments>2</experiments>
</comment>
<comment type="interaction">
    <interactant intactId="EBI-309727">
        <id>Q62392</id>
    </interactant>
    <interactant intactId="EBI-356829">
        <id>Q92598</id>
        <label>HSPH1</label>
    </interactant>
    <organismsDiffer>true</organismsDiffer>
    <experiments>2</experiments>
</comment>
<comment type="subcellular location">
    <subcellularLocation>
        <location evidence="2">Cytoplasm</location>
    </subcellularLocation>
    <subcellularLocation>
        <location evidence="2">Cytoplasmic vesicle</location>
    </subcellularLocation>
    <subcellularLocation>
        <location evidence="2">Nucleus</location>
        <location evidence="2">Nucleolus</location>
    </subcellularLocation>
    <text evidence="2">Colocalizes with intracellular vesicles.</text>
</comment>
<comment type="tissue specificity">
    <text evidence="4 5 6">Widely expressed with very high levels in adult liver and high levels in adult lung. According to PubMed:10428057 expressed at low levels in liver. Expressed at increased levels in atherosclerotic lesions observed in hyperhomocysteinema.</text>
</comment>
<comment type="induction">
    <text evidence="7">Induced by IGF-I.</text>
</comment>
<comment type="sequence caution" evidence="9">
    <conflict type="erroneous initiation">
        <sequence resource="EMBL-CDS" id="AAC52674"/>
    </conflict>
</comment>
<comment type="sequence caution" evidence="9">
    <conflict type="erroneous initiation">
        <sequence resource="EMBL-CDS" id="AAH10295"/>
    </conflict>
</comment>
<comment type="sequence caution" evidence="9">
    <conflict type="frameshift">
        <sequence resource="EMBL-CDS" id="BAE34715"/>
    </conflict>
</comment>
<organism>
    <name type="scientific">Mus musculus</name>
    <name type="common">Mouse</name>
    <dbReference type="NCBI Taxonomy" id="10090"/>
    <lineage>
        <taxon>Eukaryota</taxon>
        <taxon>Metazoa</taxon>
        <taxon>Chordata</taxon>
        <taxon>Craniata</taxon>
        <taxon>Vertebrata</taxon>
        <taxon>Euteleostomi</taxon>
        <taxon>Mammalia</taxon>
        <taxon>Eutheria</taxon>
        <taxon>Euarchontoglires</taxon>
        <taxon>Glires</taxon>
        <taxon>Rodentia</taxon>
        <taxon>Myomorpha</taxon>
        <taxon>Muroidea</taxon>
        <taxon>Muridae</taxon>
        <taxon>Murinae</taxon>
        <taxon>Mus</taxon>
        <taxon>Mus</taxon>
    </lineage>
</organism>
<name>PHLA1_MOUSE</name>
<gene>
    <name type="primary">Phlda1</name>
    <name type="synonym">Tdag51</name>
</gene>
<feature type="chain" id="PRO_0000053898" description="Pleckstrin homology-like domain family A member 1">
    <location>
        <begin position="1"/>
        <end position="405"/>
    </location>
</feature>
<feature type="domain" description="PH">
    <location>
        <begin position="153"/>
        <end position="277"/>
    </location>
</feature>
<feature type="region of interest" description="Disordered" evidence="3">
    <location>
        <begin position="1"/>
        <end position="67"/>
    </location>
</feature>
<feature type="region of interest" description="Disordered" evidence="3">
    <location>
        <begin position="189"/>
        <end position="217"/>
    </location>
</feature>
<feature type="region of interest" description="Disordered" evidence="3">
    <location>
        <begin position="293"/>
        <end position="405"/>
    </location>
</feature>
<feature type="region of interest" description="16 X 2 AA repeats of P-Q">
    <location>
        <begin position="309"/>
        <end position="344"/>
    </location>
</feature>
<feature type="region of interest" description="11 X 2 AA repeats of P-H">
    <location>
        <begin position="354"/>
        <end position="377"/>
    </location>
</feature>
<feature type="compositionally biased region" description="Basic and acidic residues" evidence="3">
    <location>
        <begin position="1"/>
        <end position="11"/>
    </location>
</feature>
<feature type="compositionally biased region" description="Basic and acidic residues" evidence="3">
    <location>
        <begin position="54"/>
        <end position="63"/>
    </location>
</feature>
<feature type="compositionally biased region" description="Low complexity" evidence="3">
    <location>
        <begin position="189"/>
        <end position="202"/>
    </location>
</feature>
<feature type="compositionally biased region" description="Polar residues" evidence="3">
    <location>
        <begin position="204"/>
        <end position="213"/>
    </location>
</feature>
<feature type="compositionally biased region" description="Low complexity" evidence="3">
    <location>
        <begin position="294"/>
        <end position="309"/>
    </location>
</feature>
<feature type="compositionally biased region" description="Pro residues" evidence="3">
    <location>
        <begin position="310"/>
        <end position="342"/>
    </location>
</feature>
<feature type="compositionally biased region" description="Basic residues" evidence="3">
    <location>
        <begin position="350"/>
        <end position="376"/>
    </location>
</feature>
<feature type="compositionally biased region" description="Low complexity" evidence="3">
    <location>
        <begin position="378"/>
        <end position="389"/>
    </location>
</feature>
<feature type="sequence conflict" description="In Ref. 2; BAE28322." evidence="9" ref="2">
    <original>P</original>
    <variation>R</variation>
    <location>
        <position position="209"/>
    </location>
</feature>
<dbReference type="EMBL" id="U44088">
    <property type="protein sequence ID" value="AAC52674.1"/>
    <property type="status" value="ALT_INIT"/>
    <property type="molecule type" value="mRNA"/>
</dbReference>
<dbReference type="EMBL" id="AK148063">
    <property type="protein sequence ID" value="BAE28322.1"/>
    <property type="molecule type" value="mRNA"/>
</dbReference>
<dbReference type="EMBL" id="AK158890">
    <property type="protein sequence ID" value="BAE34715.1"/>
    <property type="status" value="ALT_SEQ"/>
    <property type="molecule type" value="mRNA"/>
</dbReference>
<dbReference type="EMBL" id="BC010295">
    <property type="protein sequence ID" value="AAH10295.1"/>
    <property type="status" value="ALT_INIT"/>
    <property type="molecule type" value="mRNA"/>
</dbReference>
<dbReference type="CCDS" id="CCDS24167.2"/>
<dbReference type="RefSeq" id="NP_033370.2">
    <property type="nucleotide sequence ID" value="NM_009344.3"/>
</dbReference>
<dbReference type="BioGRID" id="204087">
    <property type="interactions" value="2"/>
</dbReference>
<dbReference type="FunCoup" id="Q62392">
    <property type="interactions" value="808"/>
</dbReference>
<dbReference type="IntAct" id="Q62392">
    <property type="interactions" value="4"/>
</dbReference>
<dbReference type="MINT" id="Q62392"/>
<dbReference type="STRING" id="10090.ENSMUSP00000132815"/>
<dbReference type="GlyGen" id="Q62392">
    <property type="glycosylation" value="1 site"/>
</dbReference>
<dbReference type="iPTMnet" id="Q62392"/>
<dbReference type="PhosphoSitePlus" id="Q62392"/>
<dbReference type="jPOST" id="Q62392"/>
<dbReference type="PaxDb" id="10090-ENSMUSP00000132815"/>
<dbReference type="PeptideAtlas" id="Q62392"/>
<dbReference type="ProteomicsDB" id="287931"/>
<dbReference type="Antibodypedia" id="4254">
    <property type="antibodies" value="240 antibodies from 31 providers"/>
</dbReference>
<dbReference type="DNASU" id="21664"/>
<dbReference type="Ensembl" id="ENSMUST00000164773.2">
    <property type="protein sequence ID" value="ENSMUSP00000132815.2"/>
    <property type="gene ID" value="ENSMUSG00000020205.9"/>
</dbReference>
<dbReference type="GeneID" id="21664"/>
<dbReference type="KEGG" id="mmu:21664"/>
<dbReference type="UCSC" id="uc007haf.2">
    <property type="organism name" value="mouse"/>
</dbReference>
<dbReference type="AGR" id="MGI:1096880"/>
<dbReference type="CTD" id="22822"/>
<dbReference type="MGI" id="MGI:1096880">
    <property type="gene designation" value="Phlda1"/>
</dbReference>
<dbReference type="VEuPathDB" id="HostDB:ENSMUSG00000020205"/>
<dbReference type="eggNOG" id="ENOG502RZ5Q">
    <property type="taxonomic scope" value="Eukaryota"/>
</dbReference>
<dbReference type="GeneTree" id="ENSGT00440000039564"/>
<dbReference type="HOGENOM" id="CLU_062639_0_0_1"/>
<dbReference type="InParanoid" id="Q62392"/>
<dbReference type="OMA" id="GGWPIQK"/>
<dbReference type="OrthoDB" id="9630709at2759"/>
<dbReference type="PhylomeDB" id="Q62392"/>
<dbReference type="TreeFam" id="TF332320"/>
<dbReference type="Reactome" id="R-MMU-8854521">
    <property type="pathway name" value="Interaction between PHLDA1 and AURKA"/>
</dbReference>
<dbReference type="BioGRID-ORCS" id="21664">
    <property type="hits" value="2 hits in 79 CRISPR screens"/>
</dbReference>
<dbReference type="ChiTaRS" id="Phlda1">
    <property type="organism name" value="mouse"/>
</dbReference>
<dbReference type="PRO" id="PR:Q62392"/>
<dbReference type="Proteomes" id="UP000000589">
    <property type="component" value="Chromosome 10"/>
</dbReference>
<dbReference type="RNAct" id="Q62392">
    <property type="molecule type" value="protein"/>
</dbReference>
<dbReference type="Bgee" id="ENSMUSG00000020205">
    <property type="expression patterns" value="Expressed in parotid gland and 293 other cell types or tissues"/>
</dbReference>
<dbReference type="GO" id="GO:0031410">
    <property type="term" value="C:cytoplasmic vesicle"/>
    <property type="evidence" value="ECO:0007669"/>
    <property type="project" value="UniProtKB-KW"/>
</dbReference>
<dbReference type="GO" id="GO:0005730">
    <property type="term" value="C:nucleolus"/>
    <property type="evidence" value="ECO:0007669"/>
    <property type="project" value="UniProtKB-SubCell"/>
</dbReference>
<dbReference type="GO" id="GO:0005654">
    <property type="term" value="C:nucleoplasm"/>
    <property type="evidence" value="ECO:0000304"/>
    <property type="project" value="Reactome"/>
</dbReference>
<dbReference type="GO" id="GO:1901981">
    <property type="term" value="F:phosphatidylinositol phosphate binding"/>
    <property type="evidence" value="ECO:0007669"/>
    <property type="project" value="InterPro"/>
</dbReference>
<dbReference type="GO" id="GO:0006915">
    <property type="term" value="P:apoptotic process"/>
    <property type="evidence" value="ECO:0007669"/>
    <property type="project" value="UniProtKB-KW"/>
</dbReference>
<dbReference type="GO" id="GO:0043065">
    <property type="term" value="P:positive regulation of apoptotic process"/>
    <property type="evidence" value="ECO:0007669"/>
    <property type="project" value="InterPro"/>
</dbReference>
<dbReference type="InterPro" id="IPR001849">
    <property type="entry name" value="PH_domain"/>
</dbReference>
<dbReference type="InterPro" id="IPR042832">
    <property type="entry name" value="PHLA1/2/3"/>
</dbReference>
<dbReference type="PANTHER" id="PTHR15478:SF4">
    <property type="entry name" value="PLECKSTRIN HOMOLOGY-LIKE DOMAIN FAMILY A MEMBER 1"/>
    <property type="match status" value="1"/>
</dbReference>
<dbReference type="PANTHER" id="PTHR15478">
    <property type="entry name" value="PLECKSTRIN HOMOLOGY-LIKE DOMAIN, PQ-RICH PROTEIN"/>
    <property type="match status" value="1"/>
</dbReference>
<dbReference type="SMART" id="SM00233">
    <property type="entry name" value="PH"/>
    <property type="match status" value="1"/>
</dbReference>
<dbReference type="SUPFAM" id="SSF50729">
    <property type="entry name" value="PH domain-like"/>
    <property type="match status" value="1"/>
</dbReference>